<evidence type="ECO:0000269" key="1">
    <source>
    </source>
</evidence>
<evidence type="ECO:0000305" key="2"/>
<evidence type="ECO:0000305" key="3">
    <source>
    </source>
</evidence>
<reference key="1">
    <citation type="journal article" date="2007" name="Toxicon">
        <title>Venomic analyses of Scolopendra viridicornis nigra and Scolopendra angulata (Centipede, Scolopendromorpha): shedding light on venoms from a neglected group.</title>
        <authorList>
            <person name="Rates B."/>
            <person name="Bemquerer M.P."/>
            <person name="Richardson M."/>
            <person name="Borges M.H."/>
            <person name="Morales R.A.V."/>
            <person name="De Lima M.E."/>
            <person name="Pimenta A.M.C."/>
        </authorList>
    </citation>
    <scope>PROTEIN SEQUENCE</scope>
    <scope>MASS SPECTROMETRY</scope>
    <scope>SUBCELLULAR LOCATION</scope>
    <source>
        <tissue>Venom</tissue>
    </source>
</reference>
<comment type="subcellular location">
    <subcellularLocation>
        <location evidence="1">Secreted</location>
    </subcellularLocation>
</comment>
<comment type="tissue specificity">
    <text evidence="3">Expressed by the venom gland.</text>
</comment>
<comment type="mass spectrometry"/>
<comment type="similarity">
    <text evidence="2">Belongs to the scolopendra toxin 2 family.</text>
</comment>
<sequence>ALPSFSRADRYGXRQ</sequence>
<keyword id="KW-0903">Direct protein sequencing</keyword>
<keyword id="KW-0528">Neurotoxin</keyword>
<keyword id="KW-0964">Secreted</keyword>
<keyword id="KW-0800">Toxin</keyword>
<feature type="chain" id="PRO_0000352855" description="Scolopendra 4767.06 Da toxin">
    <location>
        <begin position="1"/>
        <end position="15" status="greater than"/>
    </location>
</feature>
<feature type="non-terminal residue">
    <location>
        <position position="15"/>
    </location>
</feature>
<dbReference type="GO" id="GO:0005576">
    <property type="term" value="C:extracellular region"/>
    <property type="evidence" value="ECO:0007669"/>
    <property type="project" value="UniProtKB-SubCell"/>
</dbReference>
<dbReference type="GO" id="GO:0090729">
    <property type="term" value="F:toxin activity"/>
    <property type="evidence" value="ECO:0007669"/>
    <property type="project" value="UniProtKB-KW"/>
</dbReference>
<protein>
    <recommendedName>
        <fullName>Scolopendra 4767.06 Da toxin</fullName>
    </recommendedName>
</protein>
<organism>
    <name type="scientific">Scolopendra viridicornis nigra</name>
    <name type="common">Brazilian giant centipede</name>
    <dbReference type="NCBI Taxonomy" id="486497"/>
    <lineage>
        <taxon>Eukaryota</taxon>
        <taxon>Metazoa</taxon>
        <taxon>Ecdysozoa</taxon>
        <taxon>Arthropoda</taxon>
        <taxon>Myriapoda</taxon>
        <taxon>Chilopoda</taxon>
        <taxon>Pleurostigmophora</taxon>
        <taxon>Scolopendromorpha</taxon>
        <taxon>Scolopendridae</taxon>
        <taxon>Scolopendra</taxon>
    </lineage>
</organism>
<proteinExistence type="evidence at protein level"/>
<name>STX2_SCOVN</name>
<accession>P0C8B9</accession>